<accession>Q54MQ9</accession>
<keyword id="KW-1185">Reference proteome</keyword>
<feature type="chain" id="PRO_0000348497" description="Putative uncharacterized protein DDB_G0285721">
    <location>
        <begin position="1"/>
        <end position="70"/>
    </location>
</feature>
<proteinExistence type="predicted"/>
<dbReference type="EMBL" id="AAFI02000079">
    <property type="protein sequence ID" value="EAL64698.1"/>
    <property type="molecule type" value="Genomic_DNA"/>
</dbReference>
<dbReference type="RefSeq" id="XP_638234.1">
    <property type="nucleotide sequence ID" value="XM_633142.1"/>
</dbReference>
<dbReference type="PaxDb" id="44689-DDB0186677"/>
<dbReference type="EnsemblProtists" id="EAL64698">
    <property type="protein sequence ID" value="EAL64698"/>
    <property type="gene ID" value="DDB_G0285721"/>
</dbReference>
<dbReference type="GeneID" id="8625282"/>
<dbReference type="KEGG" id="ddi:DDB_G0285721"/>
<dbReference type="dictyBase" id="DDB_G0285721"/>
<dbReference type="VEuPathDB" id="AmoebaDB:DDB_G0285721"/>
<dbReference type="HOGENOM" id="CLU_2763177_0_0_1"/>
<dbReference type="InParanoid" id="Q54MQ9"/>
<dbReference type="PRO" id="PR:Q54MQ9"/>
<dbReference type="Proteomes" id="UP000002195">
    <property type="component" value="Chromosome 4"/>
</dbReference>
<protein>
    <recommendedName>
        <fullName>Putative uncharacterized protein DDB_G0285721</fullName>
    </recommendedName>
</protein>
<organism>
    <name type="scientific">Dictyostelium discoideum</name>
    <name type="common">Social amoeba</name>
    <dbReference type="NCBI Taxonomy" id="44689"/>
    <lineage>
        <taxon>Eukaryota</taxon>
        <taxon>Amoebozoa</taxon>
        <taxon>Evosea</taxon>
        <taxon>Eumycetozoa</taxon>
        <taxon>Dictyostelia</taxon>
        <taxon>Dictyosteliales</taxon>
        <taxon>Dictyosteliaceae</taxon>
        <taxon>Dictyostelium</taxon>
    </lineage>
</organism>
<name>Y6677_DICDI</name>
<gene>
    <name type="ORF">DDB_G0285721</name>
</gene>
<sequence length="70" mass="8359">MENMNMNKELIQQQTDKLEYYYNLMLEKLCNMVIASNASEVHEITRSFCEVLSDYKKYTDGKNIFNSYTE</sequence>
<reference key="1">
    <citation type="journal article" date="2005" name="Nature">
        <title>The genome of the social amoeba Dictyostelium discoideum.</title>
        <authorList>
            <person name="Eichinger L."/>
            <person name="Pachebat J.A."/>
            <person name="Gloeckner G."/>
            <person name="Rajandream M.A."/>
            <person name="Sucgang R."/>
            <person name="Berriman M."/>
            <person name="Song J."/>
            <person name="Olsen R."/>
            <person name="Szafranski K."/>
            <person name="Xu Q."/>
            <person name="Tunggal B."/>
            <person name="Kummerfeld S."/>
            <person name="Madera M."/>
            <person name="Konfortov B.A."/>
            <person name="Rivero F."/>
            <person name="Bankier A.T."/>
            <person name="Lehmann R."/>
            <person name="Hamlin N."/>
            <person name="Davies R."/>
            <person name="Gaudet P."/>
            <person name="Fey P."/>
            <person name="Pilcher K."/>
            <person name="Chen G."/>
            <person name="Saunders D."/>
            <person name="Sodergren E.J."/>
            <person name="Davis P."/>
            <person name="Kerhornou A."/>
            <person name="Nie X."/>
            <person name="Hall N."/>
            <person name="Anjard C."/>
            <person name="Hemphill L."/>
            <person name="Bason N."/>
            <person name="Farbrother P."/>
            <person name="Desany B."/>
            <person name="Just E."/>
            <person name="Morio T."/>
            <person name="Rost R."/>
            <person name="Churcher C.M."/>
            <person name="Cooper J."/>
            <person name="Haydock S."/>
            <person name="van Driessche N."/>
            <person name="Cronin A."/>
            <person name="Goodhead I."/>
            <person name="Muzny D.M."/>
            <person name="Mourier T."/>
            <person name="Pain A."/>
            <person name="Lu M."/>
            <person name="Harper D."/>
            <person name="Lindsay R."/>
            <person name="Hauser H."/>
            <person name="James K.D."/>
            <person name="Quiles M."/>
            <person name="Madan Babu M."/>
            <person name="Saito T."/>
            <person name="Buchrieser C."/>
            <person name="Wardroper A."/>
            <person name="Felder M."/>
            <person name="Thangavelu M."/>
            <person name="Johnson D."/>
            <person name="Knights A."/>
            <person name="Loulseged H."/>
            <person name="Mungall K.L."/>
            <person name="Oliver K."/>
            <person name="Price C."/>
            <person name="Quail M.A."/>
            <person name="Urushihara H."/>
            <person name="Hernandez J."/>
            <person name="Rabbinowitsch E."/>
            <person name="Steffen D."/>
            <person name="Sanders M."/>
            <person name="Ma J."/>
            <person name="Kohara Y."/>
            <person name="Sharp S."/>
            <person name="Simmonds M.N."/>
            <person name="Spiegler S."/>
            <person name="Tivey A."/>
            <person name="Sugano S."/>
            <person name="White B."/>
            <person name="Walker D."/>
            <person name="Woodward J.R."/>
            <person name="Winckler T."/>
            <person name="Tanaka Y."/>
            <person name="Shaulsky G."/>
            <person name="Schleicher M."/>
            <person name="Weinstock G.M."/>
            <person name="Rosenthal A."/>
            <person name="Cox E.C."/>
            <person name="Chisholm R.L."/>
            <person name="Gibbs R.A."/>
            <person name="Loomis W.F."/>
            <person name="Platzer M."/>
            <person name="Kay R.R."/>
            <person name="Williams J.G."/>
            <person name="Dear P.H."/>
            <person name="Noegel A.A."/>
            <person name="Barrell B.G."/>
            <person name="Kuspa A."/>
        </authorList>
    </citation>
    <scope>NUCLEOTIDE SEQUENCE [LARGE SCALE GENOMIC DNA]</scope>
    <source>
        <strain>AX4</strain>
    </source>
</reference>